<protein>
    <recommendedName>
        <fullName>Movement protein</fullName>
        <shortName>MP</shortName>
    </recommendedName>
    <alternativeName>
        <fullName>Protein 3A</fullName>
    </alternativeName>
</protein>
<name>MVP_PZSVT</name>
<evidence type="ECO:0000250" key="1"/>
<evidence type="ECO:0000256" key="2">
    <source>
        <dbReference type="SAM" id="MobiDB-lite"/>
    </source>
</evidence>
<organismHost>
    <name type="scientific">Solanum lycopersicum</name>
    <name type="common">Tomato</name>
    <name type="synonym">Lycopersicon esculentum</name>
    <dbReference type="NCBI Taxonomy" id="4081"/>
</organismHost>
<organism>
    <name type="scientific">Pelargonium zonate spot virus (isolate Tomato/Italy/1982)</name>
    <name type="common">PZSV</name>
    <name type="synonym">Pelargonium zonate spot virus (isolate Tomato)</name>
    <dbReference type="NCBI Taxonomy" id="650488"/>
    <lineage>
        <taxon>Viruses</taxon>
        <taxon>Riboviria</taxon>
        <taxon>Orthornavirae</taxon>
        <taxon>Kitrinoviricota</taxon>
        <taxon>Alsuviricetes</taxon>
        <taxon>Martellivirales</taxon>
        <taxon>Bromoviridae</taxon>
        <taxon>Anulavirus</taxon>
        <taxon>Pelargonium zonate spot virus</taxon>
    </lineage>
</organism>
<gene>
    <name type="ORF">ORF3a</name>
</gene>
<accession>Q9DUT1</accession>
<comment type="function">
    <text evidence="1">Transports viral genome to neighboring plant cells directly through plasmosdesmata, without any budding. The movement protein allows efficient cell to cell propagation, by bypassing the host cell wall barrier. Acts by forming a tubular structure at the host plasmodesmata, enlarging it enough to allow free passage of virion capsids (By similarity).</text>
</comment>
<comment type="subcellular location">
    <subcellularLocation>
        <location evidence="1">Host cell junction</location>
        <location evidence="1">Host plasmodesma</location>
    </subcellularLocation>
    <text evidence="1">Assembles into long tubular structures at the surface of the infected protoplast.</text>
</comment>
<sequence length="309" mass="33757">MSLIRRSTSHQLNALDNSLQSYLGSQEFKEDMREQAGFGRWKRVKASAGEKPIVLVPDNSYSALKALMKSEYEKGLIPSKGYMHLKWCLVFIVAHVPKETMGEVCIELRDPGISTADPLPGCQVVCALSDLPRAVMLVPDYDMPLGKSKLRLGNQEMRRMFFLHTKVSGFTGQGVAISLFPVWDCDFRGTCNNYVKVPAVSVGIDRTERTSLLNCVKQLKQYAENALLTMPQSISGGTSFARPSHLSLNESKTLPSTSTTEAEGSERRIHIGAPSNEDLYEVKSAGTTGGPVSLVNGVSVGASTQSAFF</sequence>
<reference key="1">
    <citation type="journal article" date="2003" name="J. Gen. Virol.">
        <title>Complete nucleotide sequence of Pelargonium zonate spot virus and its relationship with the family Bromoviridae.</title>
        <authorList>
            <person name="Finetti-Sialer M."/>
            <person name="Gallitelli D."/>
        </authorList>
    </citation>
    <scope>NUCLEOTIDE SEQUENCE [GENOMIC RNA]</scope>
    <source>
        <strain>tomato</strain>
    </source>
</reference>
<keyword id="KW-1031">Host cell junction</keyword>
<keyword id="KW-1185">Reference proteome</keyword>
<keyword id="KW-0813">Transport</keyword>
<keyword id="KW-0916">Viral movement protein</keyword>
<dbReference type="EMBL" id="AJ272329">
    <property type="protein sequence ID" value="CAC08528.1"/>
    <property type="molecule type" value="Genomic_RNA"/>
</dbReference>
<dbReference type="RefSeq" id="NP_619772.1">
    <property type="nucleotide sequence ID" value="NC_003651.1"/>
</dbReference>
<dbReference type="KEGG" id="vg:1732730"/>
<dbReference type="Proteomes" id="UP000000411">
    <property type="component" value="Genome"/>
</dbReference>
<dbReference type="GO" id="GO:0044219">
    <property type="term" value="C:host cell plasmodesma"/>
    <property type="evidence" value="ECO:0007669"/>
    <property type="project" value="UniProtKB-SubCell"/>
</dbReference>
<dbReference type="GO" id="GO:0046740">
    <property type="term" value="P:transport of virus in host, cell to cell"/>
    <property type="evidence" value="ECO:0007669"/>
    <property type="project" value="UniProtKB-KW"/>
</dbReference>
<dbReference type="InterPro" id="IPR000603">
    <property type="entry name" value="MPV"/>
</dbReference>
<dbReference type="Pfam" id="PF00803">
    <property type="entry name" value="3A"/>
    <property type="match status" value="1"/>
</dbReference>
<feature type="chain" id="PRO_0000402413" description="Movement protein">
    <location>
        <begin position="1"/>
        <end position="309"/>
    </location>
</feature>
<feature type="region of interest" description="Disordered" evidence="2">
    <location>
        <begin position="245"/>
        <end position="273"/>
    </location>
</feature>
<feature type="compositionally biased region" description="Polar residues" evidence="2">
    <location>
        <begin position="246"/>
        <end position="262"/>
    </location>
</feature>
<proteinExistence type="inferred from homology"/>